<protein>
    <recommendedName>
        <fullName>DNA-directed RNA polymerases II, IV and V subunit 9B</fullName>
    </recommendedName>
</protein>
<accession>Q8L5V0</accession>
<evidence type="ECO:0000250" key="1">
    <source>
        <dbReference type="UniProtKB" id="P32529"/>
    </source>
</evidence>
<evidence type="ECO:0000255" key="2">
    <source>
        <dbReference type="PROSITE-ProRule" id="PRU00472"/>
    </source>
</evidence>
<evidence type="ECO:0000255" key="3">
    <source>
        <dbReference type="PROSITE-ProRule" id="PRU10145"/>
    </source>
</evidence>
<evidence type="ECO:0000269" key="4">
    <source>
    </source>
</evidence>
<evidence type="ECO:0000269" key="5">
    <source>
    </source>
</evidence>
<evidence type="ECO:0000269" key="6">
    <source>
    </source>
</evidence>
<evidence type="ECO:0000305" key="7"/>
<evidence type="ECO:0000305" key="8">
    <source>
    </source>
</evidence>
<name>RPB9B_ARATH</name>
<reference key="1">
    <citation type="journal article" date="1999" name="Nature">
        <title>Sequence and analysis of chromosome 4 of the plant Arabidopsis thaliana.</title>
        <authorList>
            <person name="Mayer K.F.X."/>
            <person name="Schueller C."/>
            <person name="Wambutt R."/>
            <person name="Murphy G."/>
            <person name="Volckaert G."/>
            <person name="Pohl T."/>
            <person name="Duesterhoeft A."/>
            <person name="Stiekema W."/>
            <person name="Entian K.-D."/>
            <person name="Terryn N."/>
            <person name="Harris B."/>
            <person name="Ansorge W."/>
            <person name="Brandt P."/>
            <person name="Grivell L.A."/>
            <person name="Rieger M."/>
            <person name="Weichselgartner M."/>
            <person name="de Simone V."/>
            <person name="Obermaier B."/>
            <person name="Mache R."/>
            <person name="Mueller M."/>
            <person name="Kreis M."/>
            <person name="Delseny M."/>
            <person name="Puigdomenech P."/>
            <person name="Watson M."/>
            <person name="Schmidtheini T."/>
            <person name="Reichert B."/>
            <person name="Portetelle D."/>
            <person name="Perez-Alonso M."/>
            <person name="Boutry M."/>
            <person name="Bancroft I."/>
            <person name="Vos P."/>
            <person name="Hoheisel J."/>
            <person name="Zimmermann W."/>
            <person name="Wedler H."/>
            <person name="Ridley P."/>
            <person name="Langham S.-A."/>
            <person name="McCullagh B."/>
            <person name="Bilham L."/>
            <person name="Robben J."/>
            <person name="van der Schueren J."/>
            <person name="Grymonprez B."/>
            <person name="Chuang Y.-J."/>
            <person name="Vandenbussche F."/>
            <person name="Braeken M."/>
            <person name="Weltjens I."/>
            <person name="Voet M."/>
            <person name="Bastiaens I."/>
            <person name="Aert R."/>
            <person name="Defoor E."/>
            <person name="Weitzenegger T."/>
            <person name="Bothe G."/>
            <person name="Ramsperger U."/>
            <person name="Hilbert H."/>
            <person name="Braun M."/>
            <person name="Holzer E."/>
            <person name="Brandt A."/>
            <person name="Peters S."/>
            <person name="van Staveren M."/>
            <person name="Dirkse W."/>
            <person name="Mooijman P."/>
            <person name="Klein Lankhorst R."/>
            <person name="Rose M."/>
            <person name="Hauf J."/>
            <person name="Koetter P."/>
            <person name="Berneiser S."/>
            <person name="Hempel S."/>
            <person name="Feldpausch M."/>
            <person name="Lamberth S."/>
            <person name="Van den Daele H."/>
            <person name="De Keyser A."/>
            <person name="Buysshaert C."/>
            <person name="Gielen J."/>
            <person name="Villarroel R."/>
            <person name="De Clercq R."/>
            <person name="van Montagu M."/>
            <person name="Rogers J."/>
            <person name="Cronin A."/>
            <person name="Quail M.A."/>
            <person name="Bray-Allen S."/>
            <person name="Clark L."/>
            <person name="Doggett J."/>
            <person name="Hall S."/>
            <person name="Kay M."/>
            <person name="Lennard N."/>
            <person name="McLay K."/>
            <person name="Mayes R."/>
            <person name="Pettett A."/>
            <person name="Rajandream M.A."/>
            <person name="Lyne M."/>
            <person name="Benes V."/>
            <person name="Rechmann S."/>
            <person name="Borkova D."/>
            <person name="Bloecker H."/>
            <person name="Scharfe M."/>
            <person name="Grimm M."/>
            <person name="Loehnert T.-H."/>
            <person name="Dose S."/>
            <person name="de Haan M."/>
            <person name="Maarse A.C."/>
            <person name="Schaefer M."/>
            <person name="Mueller-Auer S."/>
            <person name="Gabel C."/>
            <person name="Fuchs M."/>
            <person name="Fartmann B."/>
            <person name="Granderath K."/>
            <person name="Dauner D."/>
            <person name="Herzl A."/>
            <person name="Neumann S."/>
            <person name="Argiriou A."/>
            <person name="Vitale D."/>
            <person name="Liguori R."/>
            <person name="Piravandi E."/>
            <person name="Massenet O."/>
            <person name="Quigley F."/>
            <person name="Clabauld G."/>
            <person name="Muendlein A."/>
            <person name="Felber R."/>
            <person name="Schnabl S."/>
            <person name="Hiller R."/>
            <person name="Schmidt W."/>
            <person name="Lecharny A."/>
            <person name="Aubourg S."/>
            <person name="Chefdor F."/>
            <person name="Cooke R."/>
            <person name="Berger C."/>
            <person name="Monfort A."/>
            <person name="Casacuberta E."/>
            <person name="Gibbons T."/>
            <person name="Weber N."/>
            <person name="Vandenbol M."/>
            <person name="Bargues M."/>
            <person name="Terol J."/>
            <person name="Torres A."/>
            <person name="Perez-Perez A."/>
            <person name="Purnelle B."/>
            <person name="Bent E."/>
            <person name="Johnson S."/>
            <person name="Tacon D."/>
            <person name="Jesse T."/>
            <person name="Heijnen L."/>
            <person name="Schwarz S."/>
            <person name="Scholler P."/>
            <person name="Heber S."/>
            <person name="Francs P."/>
            <person name="Bielke C."/>
            <person name="Frishman D."/>
            <person name="Haase D."/>
            <person name="Lemcke K."/>
            <person name="Mewes H.-W."/>
            <person name="Stocker S."/>
            <person name="Zaccaria P."/>
            <person name="Bevan M."/>
            <person name="Wilson R.K."/>
            <person name="de la Bastide M."/>
            <person name="Habermann K."/>
            <person name="Parnell L."/>
            <person name="Dedhia N."/>
            <person name="Gnoj L."/>
            <person name="Schutz K."/>
            <person name="Huang E."/>
            <person name="Spiegel L."/>
            <person name="Sekhon M."/>
            <person name="Murray J."/>
            <person name="Sheet P."/>
            <person name="Cordes M."/>
            <person name="Abu-Threideh J."/>
            <person name="Stoneking T."/>
            <person name="Kalicki J."/>
            <person name="Graves T."/>
            <person name="Harmon G."/>
            <person name="Edwards J."/>
            <person name="Latreille P."/>
            <person name="Courtney L."/>
            <person name="Cloud J."/>
            <person name="Abbott A."/>
            <person name="Scott K."/>
            <person name="Johnson D."/>
            <person name="Minx P."/>
            <person name="Bentley D."/>
            <person name="Fulton B."/>
            <person name="Miller N."/>
            <person name="Greco T."/>
            <person name="Kemp K."/>
            <person name="Kramer J."/>
            <person name="Fulton L."/>
            <person name="Mardis E."/>
            <person name="Dante M."/>
            <person name="Pepin K."/>
            <person name="Hillier L.W."/>
            <person name="Nelson J."/>
            <person name="Spieth J."/>
            <person name="Ryan E."/>
            <person name="Andrews S."/>
            <person name="Geisel C."/>
            <person name="Layman D."/>
            <person name="Du H."/>
            <person name="Ali J."/>
            <person name="Berghoff A."/>
            <person name="Jones K."/>
            <person name="Drone K."/>
            <person name="Cotton M."/>
            <person name="Joshu C."/>
            <person name="Antonoiu B."/>
            <person name="Zidanic M."/>
            <person name="Strong C."/>
            <person name="Sun H."/>
            <person name="Lamar B."/>
            <person name="Yordan C."/>
            <person name="Ma P."/>
            <person name="Zhong J."/>
            <person name="Preston R."/>
            <person name="Vil D."/>
            <person name="Shekher M."/>
            <person name="Matero A."/>
            <person name="Shah R."/>
            <person name="Swaby I.K."/>
            <person name="O'Shaughnessy A."/>
            <person name="Rodriguez M."/>
            <person name="Hoffman J."/>
            <person name="Till S."/>
            <person name="Granat S."/>
            <person name="Shohdy N."/>
            <person name="Hasegawa A."/>
            <person name="Hameed A."/>
            <person name="Lodhi M."/>
            <person name="Johnson A."/>
            <person name="Chen E."/>
            <person name="Marra M.A."/>
            <person name="Martienssen R."/>
            <person name="McCombie W.R."/>
        </authorList>
    </citation>
    <scope>NUCLEOTIDE SEQUENCE [LARGE SCALE GENOMIC DNA]</scope>
    <source>
        <strain>cv. Columbia</strain>
    </source>
</reference>
<reference key="2">
    <citation type="journal article" date="2017" name="Plant J.">
        <title>Araport11: a complete reannotation of the Arabidopsis thaliana reference genome.</title>
        <authorList>
            <person name="Cheng C.Y."/>
            <person name="Krishnakumar V."/>
            <person name="Chan A.P."/>
            <person name="Thibaud-Nissen F."/>
            <person name="Schobel S."/>
            <person name="Town C.D."/>
        </authorList>
    </citation>
    <scope>GENOME REANNOTATION</scope>
    <source>
        <strain>cv. Columbia</strain>
    </source>
</reference>
<reference key="3">
    <citation type="submission" date="2006-09" db="EMBL/GenBank/DDBJ databases">
        <title>Arabidopsis ORF clones.</title>
        <authorList>
            <person name="Quinitio C."/>
            <person name="Chen H."/>
            <person name="Kim C.J."/>
            <person name="Shinn P."/>
            <person name="Ecker J.R."/>
        </authorList>
    </citation>
    <scope>NUCLEOTIDE SEQUENCE [LARGE SCALE MRNA]</scope>
</reference>
<reference key="4">
    <citation type="submission" date="2002-03" db="EMBL/GenBank/DDBJ databases">
        <title>Full-length cDNA from Arabidopsis thaliana.</title>
        <authorList>
            <person name="Brover V.V."/>
            <person name="Troukhan M.E."/>
            <person name="Alexandrov N.A."/>
            <person name="Lu Y.-P."/>
            <person name="Flavell R.B."/>
            <person name="Feldmann K.A."/>
        </authorList>
    </citation>
    <scope>NUCLEOTIDE SEQUENCE [LARGE SCALE MRNA]</scope>
</reference>
<reference key="5">
    <citation type="journal article" date="2009" name="Mol. Cell">
        <title>Subunit compositions of the RNA-silencing enzymes Pol IV and Pol V reveal their origins as specialized forms of RNA polymerase II.</title>
        <authorList>
            <person name="Ream T.S."/>
            <person name="Haag J.R."/>
            <person name="Wierzbicki A.T."/>
            <person name="Nicora C.D."/>
            <person name="Norbeck A.D."/>
            <person name="Zhu J.K."/>
            <person name="Hagen G."/>
            <person name="Guilfoyle T.J."/>
            <person name="Pasa-Tolic L."/>
            <person name="Pikaard C.S."/>
        </authorList>
    </citation>
    <scope>FUNCTION</scope>
    <scope>IDENTIFICATION BY MASS SPECTROMETRY</scope>
    <scope>SUBUNIT</scope>
    <scope>NOMENCLATURE</scope>
</reference>
<reference key="6">
    <citation type="journal article" date="2011" name="PLoS Genet.">
        <title>SHH1, a homeodomain protein required for DNA methylation, as well as RDR2, RDM4, and chromatin remodeling factors, associate with RNA polymerase IV.</title>
        <authorList>
            <person name="Law J.A."/>
            <person name="Vashisht A.A."/>
            <person name="Wohlschlegel J.A."/>
            <person name="Jacobsen S.E."/>
        </authorList>
    </citation>
    <scope>IDENTIFICATION BY MASS SPECTROMETRY</scope>
    <scope>INTERACTION WITH NRPD1</scope>
    <scope>SUBUNIT</scope>
</reference>
<reference key="7">
    <citation type="journal article" date="2012" name="Cell Rep.">
        <title>Functional consequences of subunit diversity in RNA polymerases II and V.</title>
        <authorList>
            <person name="Tan E.H."/>
            <person name="Blevins T."/>
            <person name="Ream T.S."/>
            <person name="Pikaard C.S."/>
        </authorList>
    </citation>
    <scope>FUNCTION</scope>
    <scope>DISRUPTION PHENOTYPE</scope>
    <scope>3D-STRUCTURE MODELING</scope>
</reference>
<dbReference type="EMBL" id="AL117321">
    <property type="status" value="NOT_ANNOTATED_CDS"/>
    <property type="molecule type" value="Genomic_DNA"/>
</dbReference>
<dbReference type="EMBL" id="CP002687">
    <property type="protein sequence ID" value="AEE83723.1"/>
    <property type="molecule type" value="Genomic_DNA"/>
</dbReference>
<dbReference type="EMBL" id="BT028953">
    <property type="protein sequence ID" value="ABI49500.1"/>
    <property type="molecule type" value="mRNA"/>
</dbReference>
<dbReference type="EMBL" id="AY084946">
    <property type="protein sequence ID" value="AAM61507.1"/>
    <property type="molecule type" value="mRNA"/>
</dbReference>
<dbReference type="RefSeq" id="NP_567490.1">
    <property type="nucleotide sequence ID" value="NM_117723.4"/>
</dbReference>
<dbReference type="SMR" id="Q8L5V0"/>
<dbReference type="BioGRID" id="12615">
    <property type="interactions" value="22"/>
</dbReference>
<dbReference type="FunCoup" id="Q8L5V0">
    <property type="interactions" value="2171"/>
</dbReference>
<dbReference type="STRING" id="3702.Q8L5V0"/>
<dbReference type="PaxDb" id="3702-AT4G16265.1"/>
<dbReference type="ProteomicsDB" id="228217"/>
<dbReference type="EnsemblPlants" id="AT4G16265.1">
    <property type="protein sequence ID" value="AT4G16265.1"/>
    <property type="gene ID" value="AT4G16265"/>
</dbReference>
<dbReference type="GeneID" id="827321"/>
<dbReference type="Gramene" id="AT4G16265.1">
    <property type="protein sequence ID" value="AT4G16265.1"/>
    <property type="gene ID" value="AT4G16265"/>
</dbReference>
<dbReference type="KEGG" id="ath:AT4G16265"/>
<dbReference type="Araport" id="AT4G16265"/>
<dbReference type="TAIR" id="AT4G16265">
    <property type="gene designation" value="NRPB9B"/>
</dbReference>
<dbReference type="eggNOG" id="KOG2691">
    <property type="taxonomic scope" value="Eukaryota"/>
</dbReference>
<dbReference type="HOGENOM" id="CLU_093932_0_1_1"/>
<dbReference type="InParanoid" id="Q8L5V0"/>
<dbReference type="OMA" id="DTSMVLF"/>
<dbReference type="PhylomeDB" id="Q8L5V0"/>
<dbReference type="PRO" id="PR:Q8L5V0"/>
<dbReference type="Proteomes" id="UP000006548">
    <property type="component" value="Chromosome 4"/>
</dbReference>
<dbReference type="ExpressionAtlas" id="Q8L5V0">
    <property type="expression patterns" value="baseline and differential"/>
</dbReference>
<dbReference type="GO" id="GO:0005730">
    <property type="term" value="C:nucleolus"/>
    <property type="evidence" value="ECO:0007669"/>
    <property type="project" value="UniProtKB-SubCell"/>
</dbReference>
<dbReference type="GO" id="GO:0005665">
    <property type="term" value="C:RNA polymerase II, core complex"/>
    <property type="evidence" value="ECO:0000314"/>
    <property type="project" value="UniProtKB"/>
</dbReference>
<dbReference type="GO" id="GO:0000418">
    <property type="term" value="C:RNA polymerase IV complex"/>
    <property type="evidence" value="ECO:0000314"/>
    <property type="project" value="UniProtKB"/>
</dbReference>
<dbReference type="GO" id="GO:0000419">
    <property type="term" value="C:RNA polymerase V complex"/>
    <property type="evidence" value="ECO:0000314"/>
    <property type="project" value="UniProtKB"/>
</dbReference>
<dbReference type="GO" id="GO:0003899">
    <property type="term" value="F:DNA-directed RNA polymerase activity"/>
    <property type="evidence" value="ECO:0007669"/>
    <property type="project" value="InterPro"/>
</dbReference>
<dbReference type="GO" id="GO:0003676">
    <property type="term" value="F:nucleic acid binding"/>
    <property type="evidence" value="ECO:0007669"/>
    <property type="project" value="InterPro"/>
</dbReference>
<dbReference type="GO" id="GO:0008270">
    <property type="term" value="F:zinc ion binding"/>
    <property type="evidence" value="ECO:0007669"/>
    <property type="project" value="UniProtKB-KW"/>
</dbReference>
<dbReference type="GO" id="GO:0006351">
    <property type="term" value="P:DNA-templated transcription"/>
    <property type="evidence" value="ECO:0007669"/>
    <property type="project" value="InterPro"/>
</dbReference>
<dbReference type="GO" id="GO:0080188">
    <property type="term" value="P:gene silencing by siRNA-directed DNA methylation"/>
    <property type="evidence" value="ECO:0000315"/>
    <property type="project" value="TAIR"/>
</dbReference>
<dbReference type="CDD" id="cd10508">
    <property type="entry name" value="Zn-ribbon_RPB9"/>
    <property type="match status" value="1"/>
</dbReference>
<dbReference type="FunFam" id="2.20.25.10:FF:000008">
    <property type="entry name" value="DNA-directed RNA polymerase II subunit RPB9"/>
    <property type="match status" value="1"/>
</dbReference>
<dbReference type="FunFam" id="2.20.25.10:FF:000004">
    <property type="entry name" value="DNA-directed RNA polymerase subunit"/>
    <property type="match status" value="1"/>
</dbReference>
<dbReference type="Gene3D" id="2.20.25.10">
    <property type="match status" value="2"/>
</dbReference>
<dbReference type="InterPro" id="IPR019761">
    <property type="entry name" value="DNA-dir_RNA_pol-M_15_CS"/>
</dbReference>
<dbReference type="InterPro" id="IPR012164">
    <property type="entry name" value="Rpa12/Rpb9/Rpc10/TFS"/>
</dbReference>
<dbReference type="InterPro" id="IPR001529">
    <property type="entry name" value="Zn_ribbon_RPB9"/>
</dbReference>
<dbReference type="InterPro" id="IPR034012">
    <property type="entry name" value="Zn_ribbon_RPB9_C"/>
</dbReference>
<dbReference type="InterPro" id="IPR001222">
    <property type="entry name" value="Znf_TFIIS"/>
</dbReference>
<dbReference type="PANTHER" id="PTHR11239">
    <property type="entry name" value="DNA-DIRECTED RNA POLYMERASE"/>
    <property type="match status" value="1"/>
</dbReference>
<dbReference type="PANTHER" id="PTHR11239:SF1">
    <property type="entry name" value="DNA-DIRECTED RNA POLYMERASE II SUBUNIT RPB9"/>
    <property type="match status" value="1"/>
</dbReference>
<dbReference type="Pfam" id="PF02150">
    <property type="entry name" value="Zn_ribbon_RPB9"/>
    <property type="match status" value="1"/>
</dbReference>
<dbReference type="Pfam" id="PF01096">
    <property type="entry name" value="Zn_ribbon_TFIIS"/>
    <property type="match status" value="1"/>
</dbReference>
<dbReference type="PIRSF" id="PIRSF005586">
    <property type="entry name" value="RNApol_RpoM"/>
    <property type="match status" value="1"/>
</dbReference>
<dbReference type="SMART" id="SM00661">
    <property type="entry name" value="RPOL9"/>
    <property type="match status" value="1"/>
</dbReference>
<dbReference type="SMART" id="SM00440">
    <property type="entry name" value="ZnF_C2C2"/>
    <property type="match status" value="1"/>
</dbReference>
<dbReference type="SUPFAM" id="SSF57783">
    <property type="entry name" value="Zinc beta-ribbon"/>
    <property type="match status" value="2"/>
</dbReference>
<dbReference type="PROSITE" id="PS01030">
    <property type="entry name" value="RNA_POL_M_15KD"/>
    <property type="match status" value="1"/>
</dbReference>
<dbReference type="PROSITE" id="PS51133">
    <property type="entry name" value="ZF_TFIIS_2"/>
    <property type="match status" value="1"/>
</dbReference>
<gene>
    <name type="primary">NRPB9B</name>
    <name type="synonym">NRPD9B</name>
    <name type="synonym">NRPE9B</name>
    <name type="ordered locus">At4g16265</name>
    <name type="ORF">FCAALL</name>
</gene>
<proteinExistence type="evidence at protein level"/>
<keyword id="KW-0240">DNA-directed RNA polymerase</keyword>
<keyword id="KW-0479">Metal-binding</keyword>
<keyword id="KW-0539">Nucleus</keyword>
<keyword id="KW-1185">Reference proteome</keyword>
<keyword id="KW-0804">Transcription</keyword>
<keyword id="KW-0862">Zinc</keyword>
<keyword id="KW-0863">Zinc-finger</keyword>
<comment type="function">
    <text evidence="4 6">DNA-dependent RNA polymerase catalyzes the transcription of DNA into RNA using the four ribonucleoside triphosphates as substrates. Component of RNA polymerase II which synthesizes mRNA precursors and many functional non-coding RNAs. Pol II is the central component of the basal RNA polymerase II transcription machinery. It is composed of mobile elements that move relative to each other. Component of RNA polymerases IV and V which mediate short-interfering RNAs (siRNA) accumulation and subsequent RNA-directed DNA methylation-dependent (RdDM) transcriptional gene silencing (TGS) of endogenous repeated sequences, including transposable elements. Required for RNA silencing.</text>
</comment>
<comment type="subunit">
    <text evidence="4 5">Component of the RNA polymerase II, IV and V complexes. Interacts with NRPD1.</text>
</comment>
<comment type="subcellular location">
    <subcellularLocation>
        <location evidence="1">Nucleus</location>
        <location evidence="1">Nucleolus</location>
    </subcellularLocation>
</comment>
<comment type="disruption phenotype">
    <text evidence="6">Shorter siliques and ovate leaves with shorter petioles, smaller trichomes, prominent leaf veins and changed cuticular wax coating. Loss of methylation at RdDM target sites. Partially redundant with NRPB9A with respect to Pol II. Nrpb9a and nrpb9b double mutants are embryo lethal.</text>
</comment>
<comment type="miscellaneous">
    <text evidence="8">The loss of silencing in nrpb9b mutants is due to a defect in Pol V function, but not at the level of transcription. Pol IV functions are not impaired in nrpb9b mutants and Pol II functions are partially complemented by NRPB9A (PubMed:22550619).</text>
</comment>
<comment type="similarity">
    <text evidence="7">Belongs to the archaeal RpoM/eukaryotic RPA12/RPB9/RPC11 RNA polymerase family.</text>
</comment>
<feature type="chain" id="PRO_0000423337" description="DNA-directed RNA polymerases II, IV and V subunit 9B">
    <location>
        <begin position="1"/>
        <end position="114"/>
    </location>
</feature>
<feature type="zinc finger region" description="TFIIS-type" evidence="2">
    <location>
        <begin position="72"/>
        <end position="113"/>
    </location>
</feature>
<feature type="binding site" evidence="3">
    <location>
        <position position="7"/>
    </location>
    <ligand>
        <name>Zn(2+)</name>
        <dbReference type="ChEBI" id="CHEBI:29105"/>
        <label>1</label>
    </ligand>
</feature>
<feature type="binding site" evidence="3">
    <location>
        <position position="10"/>
    </location>
    <ligand>
        <name>Zn(2+)</name>
        <dbReference type="ChEBI" id="CHEBI:29105"/>
        <label>1</label>
    </ligand>
</feature>
<feature type="binding site" evidence="3">
    <location>
        <position position="29"/>
    </location>
    <ligand>
        <name>Zn(2+)</name>
        <dbReference type="ChEBI" id="CHEBI:29105"/>
        <label>1</label>
    </ligand>
</feature>
<feature type="binding site" evidence="3">
    <location>
        <position position="32"/>
    </location>
    <ligand>
        <name>Zn(2+)</name>
        <dbReference type="ChEBI" id="CHEBI:29105"/>
        <label>1</label>
    </ligand>
</feature>
<feature type="binding site" evidence="2">
    <location>
        <position position="76"/>
    </location>
    <ligand>
        <name>Zn(2+)</name>
        <dbReference type="ChEBI" id="CHEBI:29105"/>
        <label>2</label>
    </ligand>
</feature>
<feature type="binding site" evidence="2">
    <location>
        <position position="79"/>
    </location>
    <ligand>
        <name>Zn(2+)</name>
        <dbReference type="ChEBI" id="CHEBI:29105"/>
        <label>2</label>
    </ligand>
</feature>
<feature type="binding site" evidence="2">
    <location>
        <position position="103"/>
    </location>
    <ligand>
        <name>Zn(2+)</name>
        <dbReference type="ChEBI" id="CHEBI:29105"/>
        <label>2</label>
    </ligand>
</feature>
<feature type="binding site" evidence="2">
    <location>
        <position position="108"/>
    </location>
    <ligand>
        <name>Zn(2+)</name>
        <dbReference type="ChEBI" id="CHEBI:29105"/>
        <label>2</label>
    </ligand>
</feature>
<organism>
    <name type="scientific">Arabidopsis thaliana</name>
    <name type="common">Mouse-ear cress</name>
    <dbReference type="NCBI Taxonomy" id="3702"/>
    <lineage>
        <taxon>Eukaryota</taxon>
        <taxon>Viridiplantae</taxon>
        <taxon>Streptophyta</taxon>
        <taxon>Embryophyta</taxon>
        <taxon>Tracheophyta</taxon>
        <taxon>Spermatophyta</taxon>
        <taxon>Magnoliopsida</taxon>
        <taxon>eudicotyledons</taxon>
        <taxon>Gunneridae</taxon>
        <taxon>Pentapetalae</taxon>
        <taxon>rosids</taxon>
        <taxon>malvids</taxon>
        <taxon>Brassicales</taxon>
        <taxon>Brassicaceae</taxon>
        <taxon>Camelineae</taxon>
        <taxon>Arabidopsis</taxon>
    </lineage>
</organism>
<sequence>MSTMKFCRECNNILYPKEDKEQSILLYACRNCDHQEAADNNCVYRNEVHHSVSEQTQILSDVASDPTLPRTKAVRCAKCQHGEAVFFQATARGEEGMTLFFVCCNPNCSHRWRE</sequence>